<protein>
    <recommendedName>
        <fullName evidence="1">Aspartyl/glutamyl-tRNA(Asn/Gln) amidotransferase subunit B</fullName>
        <shortName evidence="1">Asp/Glu-ADT subunit B</shortName>
        <ecNumber evidence="1">6.3.5.-</ecNumber>
    </recommendedName>
</protein>
<gene>
    <name evidence="1" type="primary">gatB</name>
    <name type="ordered locus">Bcenmc03_3123</name>
</gene>
<feature type="chain" id="PRO_1000095191" description="Aspartyl/glutamyl-tRNA(Asn/Gln) amidotransferase subunit B">
    <location>
        <begin position="1"/>
        <end position="491"/>
    </location>
</feature>
<proteinExistence type="inferred from homology"/>
<evidence type="ECO:0000255" key="1">
    <source>
        <dbReference type="HAMAP-Rule" id="MF_00121"/>
    </source>
</evidence>
<organism>
    <name type="scientific">Burkholderia orbicola (strain MC0-3)</name>
    <dbReference type="NCBI Taxonomy" id="406425"/>
    <lineage>
        <taxon>Bacteria</taxon>
        <taxon>Pseudomonadati</taxon>
        <taxon>Pseudomonadota</taxon>
        <taxon>Betaproteobacteria</taxon>
        <taxon>Burkholderiales</taxon>
        <taxon>Burkholderiaceae</taxon>
        <taxon>Burkholderia</taxon>
        <taxon>Burkholderia cepacia complex</taxon>
        <taxon>Burkholderia orbicola</taxon>
    </lineage>
</organism>
<accession>B1K0H6</accession>
<reference key="1">
    <citation type="submission" date="2008-02" db="EMBL/GenBank/DDBJ databases">
        <title>Complete sequence of chromosome 1 of Burkholderia cenocepacia MC0-3.</title>
        <authorList>
            <person name="Copeland A."/>
            <person name="Lucas S."/>
            <person name="Lapidus A."/>
            <person name="Barry K."/>
            <person name="Bruce D."/>
            <person name="Goodwin L."/>
            <person name="Glavina del Rio T."/>
            <person name="Dalin E."/>
            <person name="Tice H."/>
            <person name="Pitluck S."/>
            <person name="Chain P."/>
            <person name="Malfatti S."/>
            <person name="Shin M."/>
            <person name="Vergez L."/>
            <person name="Schmutz J."/>
            <person name="Larimer F."/>
            <person name="Land M."/>
            <person name="Hauser L."/>
            <person name="Kyrpides N."/>
            <person name="Mikhailova N."/>
            <person name="Tiedje J."/>
            <person name="Richardson P."/>
        </authorList>
    </citation>
    <scope>NUCLEOTIDE SEQUENCE [LARGE SCALE GENOMIC DNA]</scope>
    <source>
        <strain>MC0-3</strain>
    </source>
</reference>
<sequence>MATQWEVVIGLETHAQLSTVSKIFSGASTQFGAEPNTQACPVDLALPGVLPVLNRGAVERAIRFGLAIGSTIAPRSIFARKNYFYPDLPKGYQISQYEIPVVQGGQITIQVPANEKAGKPAYEKTVNLTRAHLEEDAGKSLHEDFAGMTGIDLNRAGTPLLEIVTEPEMRSAAEAVAYAKALHALVVWLGICDGNMQEGSFRCDANVSVRPVGQEKFGTRAEIKNLNSFRFLEEAINYEVRRQIELIEDGGEVVQETRLYDPDKRETRSMRSKEDAHDYRYFPDPDLMPLVIGRDWVERVQSGMPELPAAMQQRFVDEYGVSAYDAGVLTSSKAMAAYFESVVAKAGAANAKIVANWLMGDVSSQLNRDGIEIDAIPVSAAQLALLLQRIADGTISNKIAKEIFATIWDEKATDEGAADRIIDAKGLKQISDTGALEAIIDEVLAANAKSVEEFRAGKEKAFNALIGQAMKATKGKANPQQVNELLKKKLG</sequence>
<dbReference type="EC" id="6.3.5.-" evidence="1"/>
<dbReference type="EMBL" id="CP000958">
    <property type="protein sequence ID" value="ACA92281.1"/>
    <property type="molecule type" value="Genomic_DNA"/>
</dbReference>
<dbReference type="RefSeq" id="WP_006477480.1">
    <property type="nucleotide sequence ID" value="NC_010508.1"/>
</dbReference>
<dbReference type="SMR" id="B1K0H6"/>
<dbReference type="GeneID" id="83049904"/>
<dbReference type="KEGG" id="bcm:Bcenmc03_3123"/>
<dbReference type="HOGENOM" id="CLU_019240_0_0_4"/>
<dbReference type="Proteomes" id="UP000002169">
    <property type="component" value="Chromosome 1"/>
</dbReference>
<dbReference type="GO" id="GO:0050566">
    <property type="term" value="F:asparaginyl-tRNA synthase (glutamine-hydrolyzing) activity"/>
    <property type="evidence" value="ECO:0007669"/>
    <property type="project" value="RHEA"/>
</dbReference>
<dbReference type="GO" id="GO:0005524">
    <property type="term" value="F:ATP binding"/>
    <property type="evidence" value="ECO:0007669"/>
    <property type="project" value="UniProtKB-KW"/>
</dbReference>
<dbReference type="GO" id="GO:0050567">
    <property type="term" value="F:glutaminyl-tRNA synthase (glutamine-hydrolyzing) activity"/>
    <property type="evidence" value="ECO:0007669"/>
    <property type="project" value="UniProtKB-UniRule"/>
</dbReference>
<dbReference type="GO" id="GO:0070681">
    <property type="term" value="P:glutaminyl-tRNAGln biosynthesis via transamidation"/>
    <property type="evidence" value="ECO:0007669"/>
    <property type="project" value="TreeGrafter"/>
</dbReference>
<dbReference type="GO" id="GO:0006412">
    <property type="term" value="P:translation"/>
    <property type="evidence" value="ECO:0007669"/>
    <property type="project" value="UniProtKB-UniRule"/>
</dbReference>
<dbReference type="FunFam" id="1.10.10.410:FF:000001">
    <property type="entry name" value="Aspartyl/glutamyl-tRNA(Asn/Gln) amidotransferase subunit B"/>
    <property type="match status" value="1"/>
</dbReference>
<dbReference type="FunFam" id="1.10.150.380:FF:000001">
    <property type="entry name" value="Aspartyl/glutamyl-tRNA(Asn/Gln) amidotransferase subunit B"/>
    <property type="match status" value="1"/>
</dbReference>
<dbReference type="Gene3D" id="1.10.10.410">
    <property type="match status" value="1"/>
</dbReference>
<dbReference type="Gene3D" id="1.10.150.380">
    <property type="entry name" value="GatB domain, N-terminal subdomain"/>
    <property type="match status" value="1"/>
</dbReference>
<dbReference type="HAMAP" id="MF_00121">
    <property type="entry name" value="GatB"/>
    <property type="match status" value="1"/>
</dbReference>
<dbReference type="InterPro" id="IPR017959">
    <property type="entry name" value="Asn/Gln-tRNA_amidoTrfase_suB/E"/>
</dbReference>
<dbReference type="InterPro" id="IPR006075">
    <property type="entry name" value="Asn/Gln-tRNA_Trfase_suB/E_cat"/>
</dbReference>
<dbReference type="InterPro" id="IPR018027">
    <property type="entry name" value="Asn/Gln_amidotransferase"/>
</dbReference>
<dbReference type="InterPro" id="IPR003789">
    <property type="entry name" value="Asn/Gln_tRNA_amidoTrase-B-like"/>
</dbReference>
<dbReference type="InterPro" id="IPR004413">
    <property type="entry name" value="GatB"/>
</dbReference>
<dbReference type="InterPro" id="IPR042114">
    <property type="entry name" value="GatB_C_1"/>
</dbReference>
<dbReference type="InterPro" id="IPR023168">
    <property type="entry name" value="GatB_Yqey_C_2"/>
</dbReference>
<dbReference type="InterPro" id="IPR017958">
    <property type="entry name" value="Gln-tRNA_amidoTrfase_suB_CS"/>
</dbReference>
<dbReference type="InterPro" id="IPR014746">
    <property type="entry name" value="Gln_synth/guanido_kin_cat_dom"/>
</dbReference>
<dbReference type="NCBIfam" id="TIGR00133">
    <property type="entry name" value="gatB"/>
    <property type="match status" value="1"/>
</dbReference>
<dbReference type="NCBIfam" id="NF004012">
    <property type="entry name" value="PRK05477.1-2"/>
    <property type="match status" value="1"/>
</dbReference>
<dbReference type="NCBIfam" id="NF004014">
    <property type="entry name" value="PRK05477.1-4"/>
    <property type="match status" value="1"/>
</dbReference>
<dbReference type="NCBIfam" id="NF004015">
    <property type="entry name" value="PRK05477.1-5"/>
    <property type="match status" value="1"/>
</dbReference>
<dbReference type="PANTHER" id="PTHR11659">
    <property type="entry name" value="GLUTAMYL-TRNA GLN AMIDOTRANSFERASE SUBUNIT B MITOCHONDRIAL AND PROKARYOTIC PET112-RELATED"/>
    <property type="match status" value="1"/>
</dbReference>
<dbReference type="PANTHER" id="PTHR11659:SF0">
    <property type="entry name" value="GLUTAMYL-TRNA(GLN) AMIDOTRANSFERASE SUBUNIT B, MITOCHONDRIAL"/>
    <property type="match status" value="1"/>
</dbReference>
<dbReference type="Pfam" id="PF02934">
    <property type="entry name" value="GatB_N"/>
    <property type="match status" value="1"/>
</dbReference>
<dbReference type="Pfam" id="PF02637">
    <property type="entry name" value="GatB_Yqey"/>
    <property type="match status" value="1"/>
</dbReference>
<dbReference type="SMART" id="SM00845">
    <property type="entry name" value="GatB_Yqey"/>
    <property type="match status" value="1"/>
</dbReference>
<dbReference type="SUPFAM" id="SSF89095">
    <property type="entry name" value="GatB/YqeY motif"/>
    <property type="match status" value="1"/>
</dbReference>
<dbReference type="SUPFAM" id="SSF55931">
    <property type="entry name" value="Glutamine synthetase/guanido kinase"/>
    <property type="match status" value="1"/>
</dbReference>
<dbReference type="PROSITE" id="PS01234">
    <property type="entry name" value="GATB"/>
    <property type="match status" value="1"/>
</dbReference>
<keyword id="KW-0067">ATP-binding</keyword>
<keyword id="KW-0436">Ligase</keyword>
<keyword id="KW-0547">Nucleotide-binding</keyword>
<keyword id="KW-0648">Protein biosynthesis</keyword>
<name>GATB_BURO0</name>
<comment type="function">
    <text evidence="1">Allows the formation of correctly charged Asn-tRNA(Asn) or Gln-tRNA(Gln) through the transamidation of misacylated Asp-tRNA(Asn) or Glu-tRNA(Gln) in organisms which lack either or both of asparaginyl-tRNA or glutaminyl-tRNA synthetases. The reaction takes place in the presence of glutamine and ATP through an activated phospho-Asp-tRNA(Asn) or phospho-Glu-tRNA(Gln).</text>
</comment>
<comment type="catalytic activity">
    <reaction evidence="1">
        <text>L-glutamyl-tRNA(Gln) + L-glutamine + ATP + H2O = L-glutaminyl-tRNA(Gln) + L-glutamate + ADP + phosphate + H(+)</text>
        <dbReference type="Rhea" id="RHEA:17521"/>
        <dbReference type="Rhea" id="RHEA-COMP:9681"/>
        <dbReference type="Rhea" id="RHEA-COMP:9684"/>
        <dbReference type="ChEBI" id="CHEBI:15377"/>
        <dbReference type="ChEBI" id="CHEBI:15378"/>
        <dbReference type="ChEBI" id="CHEBI:29985"/>
        <dbReference type="ChEBI" id="CHEBI:30616"/>
        <dbReference type="ChEBI" id="CHEBI:43474"/>
        <dbReference type="ChEBI" id="CHEBI:58359"/>
        <dbReference type="ChEBI" id="CHEBI:78520"/>
        <dbReference type="ChEBI" id="CHEBI:78521"/>
        <dbReference type="ChEBI" id="CHEBI:456216"/>
    </reaction>
</comment>
<comment type="catalytic activity">
    <reaction evidence="1">
        <text>L-aspartyl-tRNA(Asn) + L-glutamine + ATP + H2O = L-asparaginyl-tRNA(Asn) + L-glutamate + ADP + phosphate + 2 H(+)</text>
        <dbReference type="Rhea" id="RHEA:14513"/>
        <dbReference type="Rhea" id="RHEA-COMP:9674"/>
        <dbReference type="Rhea" id="RHEA-COMP:9677"/>
        <dbReference type="ChEBI" id="CHEBI:15377"/>
        <dbReference type="ChEBI" id="CHEBI:15378"/>
        <dbReference type="ChEBI" id="CHEBI:29985"/>
        <dbReference type="ChEBI" id="CHEBI:30616"/>
        <dbReference type="ChEBI" id="CHEBI:43474"/>
        <dbReference type="ChEBI" id="CHEBI:58359"/>
        <dbReference type="ChEBI" id="CHEBI:78515"/>
        <dbReference type="ChEBI" id="CHEBI:78516"/>
        <dbReference type="ChEBI" id="CHEBI:456216"/>
    </reaction>
</comment>
<comment type="subunit">
    <text evidence="1">Heterotrimer of A, B and C subunits.</text>
</comment>
<comment type="similarity">
    <text evidence="1">Belongs to the GatB/GatE family. GatB subfamily.</text>
</comment>